<sequence length="229" mass="24088">MSLLAQLDQKIAANGGLIVSCQPVPDSPLDKPEIVAAMALAAEQAGAVAIRIEGVANLQATRAVVSVPIIGIVKRDLEDSPVRITAYIEDVDALAQAGADIIAIDGTDRPRPVPVETLLARIHHHGLLAMTDCSTPEDGLACQKLGAEIIGTTLSGYTTPETPEEPDLALVKTLSEAGCRVIAEGRYNTPAQAADAMRHGAWAVTVGSAITRLEHICQWYNTAMKKAVL</sequence>
<gene>
    <name evidence="1" type="primary">nanE</name>
    <name type="ordered locus">SF3259</name>
    <name type="ordered locus">S3476</name>
</gene>
<organism>
    <name type="scientific">Shigella flexneri</name>
    <dbReference type="NCBI Taxonomy" id="623"/>
    <lineage>
        <taxon>Bacteria</taxon>
        <taxon>Pseudomonadati</taxon>
        <taxon>Pseudomonadota</taxon>
        <taxon>Gammaproteobacteria</taxon>
        <taxon>Enterobacterales</taxon>
        <taxon>Enterobacteriaceae</taxon>
        <taxon>Shigella</taxon>
    </lineage>
</organism>
<protein>
    <recommendedName>
        <fullName evidence="1">Putative N-acetylmannosamine-6-phosphate 2-epimerase</fullName>
        <ecNumber evidence="1">5.1.3.9</ecNumber>
    </recommendedName>
    <alternativeName>
        <fullName evidence="1">ManNAc-6-P epimerase</fullName>
    </alternativeName>
</protein>
<feature type="chain" id="PRO_0000179796" description="Putative N-acetylmannosamine-6-phosphate 2-epimerase">
    <location>
        <begin position="1"/>
        <end position="229"/>
    </location>
</feature>
<accession>P59442</accession>
<keyword id="KW-0119">Carbohydrate metabolism</keyword>
<keyword id="KW-0413">Isomerase</keyword>
<keyword id="KW-1185">Reference proteome</keyword>
<dbReference type="EC" id="5.1.3.9" evidence="1"/>
<dbReference type="EMBL" id="AE005674">
    <property type="protein sequence ID" value="AAN44723.2"/>
    <property type="molecule type" value="Genomic_DNA"/>
</dbReference>
<dbReference type="EMBL" id="AE014073">
    <property type="protein sequence ID" value="AAP18536.1"/>
    <property type="molecule type" value="Genomic_DNA"/>
</dbReference>
<dbReference type="RefSeq" id="WP_001300570.1">
    <property type="nucleotide sequence ID" value="NZ_WPGW01000176.1"/>
</dbReference>
<dbReference type="SMR" id="P59442"/>
<dbReference type="STRING" id="198214.SF3259"/>
<dbReference type="PaxDb" id="198214-SF3259"/>
<dbReference type="KEGG" id="sfl:SF3259"/>
<dbReference type="KEGG" id="sfx:S3476"/>
<dbReference type="PATRIC" id="fig|198214.7.peg.3862"/>
<dbReference type="HOGENOM" id="CLU_086300_0_0_6"/>
<dbReference type="UniPathway" id="UPA00629">
    <property type="reaction ID" value="UER00682"/>
</dbReference>
<dbReference type="Proteomes" id="UP000001006">
    <property type="component" value="Chromosome"/>
</dbReference>
<dbReference type="Proteomes" id="UP000002673">
    <property type="component" value="Chromosome"/>
</dbReference>
<dbReference type="GO" id="GO:0005829">
    <property type="term" value="C:cytosol"/>
    <property type="evidence" value="ECO:0007669"/>
    <property type="project" value="TreeGrafter"/>
</dbReference>
<dbReference type="GO" id="GO:0047465">
    <property type="term" value="F:N-acylglucosamine-6-phosphate 2-epimerase activity"/>
    <property type="evidence" value="ECO:0007669"/>
    <property type="project" value="UniProtKB-EC"/>
</dbReference>
<dbReference type="GO" id="GO:0005975">
    <property type="term" value="P:carbohydrate metabolic process"/>
    <property type="evidence" value="ECO:0007669"/>
    <property type="project" value="UniProtKB-UniRule"/>
</dbReference>
<dbReference type="GO" id="GO:0006053">
    <property type="term" value="P:N-acetylmannosamine catabolic process"/>
    <property type="evidence" value="ECO:0007669"/>
    <property type="project" value="TreeGrafter"/>
</dbReference>
<dbReference type="GO" id="GO:0019262">
    <property type="term" value="P:N-acetylneuraminate catabolic process"/>
    <property type="evidence" value="ECO:0007669"/>
    <property type="project" value="UniProtKB-UniRule"/>
</dbReference>
<dbReference type="CDD" id="cd04729">
    <property type="entry name" value="NanE"/>
    <property type="match status" value="1"/>
</dbReference>
<dbReference type="FunFam" id="3.20.20.70:FF:000035">
    <property type="entry name" value="Putative N-acetylmannosamine-6-phosphate 2-epimerase"/>
    <property type="match status" value="1"/>
</dbReference>
<dbReference type="Gene3D" id="3.20.20.70">
    <property type="entry name" value="Aldolase class I"/>
    <property type="match status" value="1"/>
</dbReference>
<dbReference type="HAMAP" id="MF_01235">
    <property type="entry name" value="ManNAc6P_epimer"/>
    <property type="match status" value="1"/>
</dbReference>
<dbReference type="InterPro" id="IPR013785">
    <property type="entry name" value="Aldolase_TIM"/>
</dbReference>
<dbReference type="InterPro" id="IPR007260">
    <property type="entry name" value="NanE"/>
</dbReference>
<dbReference type="InterPro" id="IPR011060">
    <property type="entry name" value="RibuloseP-bd_barrel"/>
</dbReference>
<dbReference type="NCBIfam" id="NF002231">
    <property type="entry name" value="PRK01130.1"/>
    <property type="match status" value="1"/>
</dbReference>
<dbReference type="PANTHER" id="PTHR36204">
    <property type="entry name" value="N-ACETYLMANNOSAMINE-6-PHOSPHATE 2-EPIMERASE-RELATED"/>
    <property type="match status" value="1"/>
</dbReference>
<dbReference type="PANTHER" id="PTHR36204:SF1">
    <property type="entry name" value="N-ACETYLMANNOSAMINE-6-PHOSPHATE 2-EPIMERASE-RELATED"/>
    <property type="match status" value="1"/>
</dbReference>
<dbReference type="Pfam" id="PF04131">
    <property type="entry name" value="NanE"/>
    <property type="match status" value="1"/>
</dbReference>
<dbReference type="SUPFAM" id="SSF51366">
    <property type="entry name" value="Ribulose-phoshate binding barrel"/>
    <property type="match status" value="1"/>
</dbReference>
<reference key="1">
    <citation type="journal article" date="2002" name="Nucleic Acids Res.">
        <title>Genome sequence of Shigella flexneri 2a: insights into pathogenicity through comparison with genomes of Escherichia coli K12 and O157.</title>
        <authorList>
            <person name="Jin Q."/>
            <person name="Yuan Z."/>
            <person name="Xu J."/>
            <person name="Wang Y."/>
            <person name="Shen Y."/>
            <person name="Lu W."/>
            <person name="Wang J."/>
            <person name="Liu H."/>
            <person name="Yang J."/>
            <person name="Yang F."/>
            <person name="Zhang X."/>
            <person name="Zhang J."/>
            <person name="Yang G."/>
            <person name="Wu H."/>
            <person name="Qu D."/>
            <person name="Dong J."/>
            <person name="Sun L."/>
            <person name="Xue Y."/>
            <person name="Zhao A."/>
            <person name="Gao Y."/>
            <person name="Zhu J."/>
            <person name="Kan B."/>
            <person name="Ding K."/>
            <person name="Chen S."/>
            <person name="Cheng H."/>
            <person name="Yao Z."/>
            <person name="He B."/>
            <person name="Chen R."/>
            <person name="Ma D."/>
            <person name="Qiang B."/>
            <person name="Wen Y."/>
            <person name="Hou Y."/>
            <person name="Yu J."/>
        </authorList>
    </citation>
    <scope>NUCLEOTIDE SEQUENCE [LARGE SCALE GENOMIC DNA]</scope>
    <source>
        <strain>301 / Serotype 2a</strain>
    </source>
</reference>
<reference key="2">
    <citation type="journal article" date="2003" name="Infect. Immun.">
        <title>Complete genome sequence and comparative genomics of Shigella flexneri serotype 2a strain 2457T.</title>
        <authorList>
            <person name="Wei J."/>
            <person name="Goldberg M.B."/>
            <person name="Burland V."/>
            <person name="Venkatesan M.M."/>
            <person name="Deng W."/>
            <person name="Fournier G."/>
            <person name="Mayhew G.F."/>
            <person name="Plunkett G. III"/>
            <person name="Rose D.J."/>
            <person name="Darling A."/>
            <person name="Mau B."/>
            <person name="Perna N.T."/>
            <person name="Payne S.M."/>
            <person name="Runyen-Janecky L.J."/>
            <person name="Zhou S."/>
            <person name="Schwartz D.C."/>
            <person name="Blattner F.R."/>
        </authorList>
    </citation>
    <scope>NUCLEOTIDE SEQUENCE [LARGE SCALE GENOMIC DNA]</scope>
    <source>
        <strain>ATCC 700930 / 2457T / Serotype 2a</strain>
    </source>
</reference>
<comment type="function">
    <text evidence="1">Converts N-acetylmannosamine-6-phosphate (ManNAc-6-P) to N-acetylglucosamine-6-phosphate (GlcNAc-6-P).</text>
</comment>
<comment type="catalytic activity">
    <reaction evidence="1">
        <text>an N-acyl-D-glucosamine 6-phosphate = an N-acyl-D-mannosamine 6-phosphate</text>
        <dbReference type="Rhea" id="RHEA:23932"/>
        <dbReference type="ChEBI" id="CHEBI:57599"/>
        <dbReference type="ChEBI" id="CHEBI:57666"/>
        <dbReference type="EC" id="5.1.3.9"/>
    </reaction>
</comment>
<comment type="pathway">
    <text evidence="1">Amino-sugar metabolism; N-acetylneuraminate degradation; D-fructose 6-phosphate from N-acetylneuraminate: step 3/5.</text>
</comment>
<comment type="similarity">
    <text evidence="1">Belongs to the NanE family.</text>
</comment>
<evidence type="ECO:0000255" key="1">
    <source>
        <dbReference type="HAMAP-Rule" id="MF_01235"/>
    </source>
</evidence>
<proteinExistence type="inferred from homology"/>
<name>NANE_SHIFL</name>